<dbReference type="EMBL" id="AK015939">
    <property type="protein sequence ID" value="BAB30043.1"/>
    <property type="molecule type" value="mRNA"/>
</dbReference>
<dbReference type="EMBL" id="AL645910">
    <property type="status" value="NOT_ANNOTATED_CDS"/>
    <property type="molecule type" value="Genomic_DNA"/>
</dbReference>
<dbReference type="EMBL" id="AL731658">
    <property type="status" value="NOT_ANNOTATED_CDS"/>
    <property type="molecule type" value="Genomic_DNA"/>
</dbReference>
<dbReference type="EMBL" id="BC120781">
    <property type="protein sequence ID" value="AAI20782.1"/>
    <property type="molecule type" value="mRNA"/>
</dbReference>
<dbReference type="EMBL" id="BC120783">
    <property type="protein sequence ID" value="AAI20784.1"/>
    <property type="molecule type" value="mRNA"/>
</dbReference>
<dbReference type="EMBL" id="BC144842">
    <property type="protein sequence ID" value="AAI44843.1"/>
    <property type="molecule type" value="mRNA"/>
</dbReference>
<dbReference type="CCDS" id="CCDS36096.1">
    <molecule id="Q5SQP1-1"/>
</dbReference>
<dbReference type="RefSeq" id="NP_001404894.1">
    <molecule id="Q5SQP1-1"/>
    <property type="nucleotide sequence ID" value="NM_001417965.1"/>
</dbReference>
<dbReference type="RefSeq" id="NP_083734.1">
    <molecule id="Q5SQP1-1"/>
    <property type="nucleotide sequence ID" value="NM_029458.2"/>
</dbReference>
<dbReference type="RefSeq" id="XP_011242079.1">
    <molecule id="Q5SQP1-1"/>
    <property type="nucleotide sequence ID" value="XM_011243777.3"/>
</dbReference>
<dbReference type="RefSeq" id="XP_011242081.1">
    <property type="nucleotide sequence ID" value="XM_011243779.2"/>
</dbReference>
<dbReference type="RefSeq" id="XP_011242082.1">
    <molecule id="Q5SQP1-1"/>
    <property type="nucleotide sequence ID" value="XM_011243780.3"/>
</dbReference>
<dbReference type="RefSeq" id="XP_011242083.1">
    <molecule id="Q5SQP1-1"/>
    <property type="nucleotide sequence ID" value="XM_011243781.1"/>
</dbReference>
<dbReference type="SMR" id="Q5SQP1"/>
<dbReference type="FunCoup" id="Q5SQP1">
    <property type="interactions" value="277"/>
</dbReference>
<dbReference type="STRING" id="10090.ENSMUSP00000105574"/>
<dbReference type="iPTMnet" id="Q5SQP1"/>
<dbReference type="PhosphoSitePlus" id="Q5SQP1"/>
<dbReference type="PaxDb" id="10090-ENSMUSP00000105574"/>
<dbReference type="ProteomicsDB" id="273380">
    <molecule id="Q5SQP1-1"/>
</dbReference>
<dbReference type="ProteomicsDB" id="273381">
    <molecule id="Q5SQP1-2"/>
</dbReference>
<dbReference type="Antibodypedia" id="311">
    <property type="antibodies" value="145 antibodies from 18 providers"/>
</dbReference>
<dbReference type="Ensembl" id="ENSMUST00000109948.8">
    <molecule id="Q5SQP1-1"/>
    <property type="protein sequence ID" value="ENSMUSP00000105574.2"/>
    <property type="gene ID" value="ENSMUSG00000020419.12"/>
</dbReference>
<dbReference type="Ensembl" id="ENSMUST00000109949.8">
    <molecule id="Q5SQP1-1"/>
    <property type="protein sequence ID" value="ENSMUSP00000105575.2"/>
    <property type="gene ID" value="ENSMUSG00000020419.12"/>
</dbReference>
<dbReference type="GeneID" id="75828"/>
<dbReference type="KEGG" id="mmu:75828"/>
<dbReference type="UCSC" id="uc007huv.1">
    <molecule id="Q5SQP1-1"/>
    <property type="organism name" value="mouse"/>
</dbReference>
<dbReference type="UCSC" id="uc011xqw.1">
    <molecule id="Q5SQP1-2"/>
    <property type="organism name" value="mouse"/>
</dbReference>
<dbReference type="AGR" id="MGI:1923078"/>
<dbReference type="CTD" id="150280"/>
<dbReference type="MGI" id="MGI:1923078">
    <property type="gene designation" value="Hormad2"/>
</dbReference>
<dbReference type="VEuPathDB" id="HostDB:ENSMUSG00000020419"/>
<dbReference type="eggNOG" id="KOG4652">
    <property type="taxonomic scope" value="Eukaryota"/>
</dbReference>
<dbReference type="GeneTree" id="ENSGT00390000018130"/>
<dbReference type="HOGENOM" id="CLU_058638_2_0_1"/>
<dbReference type="InParanoid" id="Q5SQP1"/>
<dbReference type="OMA" id="GCFHALE"/>
<dbReference type="OrthoDB" id="1928087at2759"/>
<dbReference type="PhylomeDB" id="Q5SQP1"/>
<dbReference type="TreeFam" id="TF313989"/>
<dbReference type="BioGRID-ORCS" id="75828">
    <property type="hits" value="1 hit in 76 CRISPR screens"/>
</dbReference>
<dbReference type="ChiTaRS" id="Hormad2">
    <property type="organism name" value="mouse"/>
</dbReference>
<dbReference type="PRO" id="PR:Q5SQP1"/>
<dbReference type="Proteomes" id="UP000000589">
    <property type="component" value="Chromosome 11"/>
</dbReference>
<dbReference type="RNAct" id="Q5SQP1">
    <property type="molecule type" value="protein"/>
</dbReference>
<dbReference type="Bgee" id="ENSMUSG00000020419">
    <property type="expression patterns" value="Expressed in spermatocyte and 28 other cell types or tissues"/>
</dbReference>
<dbReference type="ExpressionAtlas" id="Q5SQP1">
    <property type="expression patterns" value="baseline and differential"/>
</dbReference>
<dbReference type="GO" id="GO:0005813">
    <property type="term" value="C:centrosome"/>
    <property type="evidence" value="ECO:0007669"/>
    <property type="project" value="Ensembl"/>
</dbReference>
<dbReference type="GO" id="GO:0005694">
    <property type="term" value="C:chromosome"/>
    <property type="evidence" value="ECO:0000314"/>
    <property type="project" value="UniProtKB"/>
</dbReference>
<dbReference type="GO" id="GO:0005829">
    <property type="term" value="C:cytosol"/>
    <property type="evidence" value="ECO:0007669"/>
    <property type="project" value="Ensembl"/>
</dbReference>
<dbReference type="GO" id="GO:0005654">
    <property type="term" value="C:nucleoplasm"/>
    <property type="evidence" value="ECO:0007669"/>
    <property type="project" value="Ensembl"/>
</dbReference>
<dbReference type="GO" id="GO:0005634">
    <property type="term" value="C:nucleus"/>
    <property type="evidence" value="ECO:0000314"/>
    <property type="project" value="UniProtKB"/>
</dbReference>
<dbReference type="GO" id="GO:0000795">
    <property type="term" value="C:synaptonemal complex"/>
    <property type="evidence" value="ECO:0000314"/>
    <property type="project" value="MGI"/>
</dbReference>
<dbReference type="GO" id="GO:0051321">
    <property type="term" value="P:meiotic cell cycle"/>
    <property type="evidence" value="ECO:0000270"/>
    <property type="project" value="UniProtKB"/>
</dbReference>
<dbReference type="GO" id="GO:0051177">
    <property type="term" value="P:meiotic sister chromatid cohesion"/>
    <property type="evidence" value="ECO:0000315"/>
    <property type="project" value="UniProtKB"/>
</dbReference>
<dbReference type="FunFam" id="3.30.900.10:FF:000006">
    <property type="entry name" value="HORMA domain-containing protein 1"/>
    <property type="match status" value="1"/>
</dbReference>
<dbReference type="Gene3D" id="3.30.900.10">
    <property type="entry name" value="HORMA domain"/>
    <property type="match status" value="1"/>
</dbReference>
<dbReference type="InterPro" id="IPR003511">
    <property type="entry name" value="HORMA_dom"/>
</dbReference>
<dbReference type="InterPro" id="IPR036570">
    <property type="entry name" value="HORMA_dom_sf"/>
</dbReference>
<dbReference type="InterPro" id="IPR051294">
    <property type="entry name" value="HORMA_MeioticProgression"/>
</dbReference>
<dbReference type="PANTHER" id="PTHR48225">
    <property type="entry name" value="HORMA DOMAIN-CONTAINING PROTEIN 1"/>
    <property type="match status" value="1"/>
</dbReference>
<dbReference type="PANTHER" id="PTHR48225:SF6">
    <property type="entry name" value="HORMA DOMAIN-CONTAINING PROTEIN 2"/>
    <property type="match status" value="1"/>
</dbReference>
<dbReference type="Pfam" id="PF02301">
    <property type="entry name" value="HORMA"/>
    <property type="match status" value="1"/>
</dbReference>
<dbReference type="SUPFAM" id="SSF56019">
    <property type="entry name" value="The spindle assembly checkpoint protein mad2"/>
    <property type="match status" value="1"/>
</dbReference>
<dbReference type="PROSITE" id="PS50815">
    <property type="entry name" value="HORMA"/>
    <property type="match status" value="1"/>
</dbReference>
<evidence type="ECO:0000255" key="1">
    <source>
        <dbReference type="PROSITE-ProRule" id="PRU00109"/>
    </source>
</evidence>
<evidence type="ECO:0000269" key="2">
    <source>
    </source>
</evidence>
<evidence type="ECO:0000269" key="3">
    <source>
    </source>
</evidence>
<evidence type="ECO:0000269" key="4">
    <source>
    </source>
</evidence>
<evidence type="ECO:0000269" key="5">
    <source>
    </source>
</evidence>
<evidence type="ECO:0000303" key="6">
    <source>
    </source>
</evidence>
<evidence type="ECO:0007744" key="7">
    <source>
    </source>
</evidence>
<accession>Q5SQP1</accession>
<accession>B7ZMW2</accession>
<accession>Q9D507</accession>
<feature type="chain" id="PRO_0000284670" description="HORMA domain-containing protein 2">
    <location>
        <begin position="1"/>
        <end position="306"/>
    </location>
</feature>
<feature type="domain" description="HORMA" evidence="1">
    <location>
        <begin position="29"/>
        <end position="232"/>
    </location>
</feature>
<feature type="modified residue" description="Phosphoserine" evidence="7">
    <location>
        <position position="271"/>
    </location>
</feature>
<feature type="splice variant" id="VSP_024605" description="In isoform 2." evidence="6">
    <location>
        <begin position="1"/>
        <end position="59"/>
    </location>
</feature>
<feature type="splice variant" id="VSP_024606" description="In isoform 2." evidence="6">
    <original>DRRLDD</original>
    <variation>MRRDPN</variation>
    <location>
        <begin position="60"/>
        <end position="65"/>
    </location>
</feature>
<gene>
    <name type="primary">Hormad2</name>
</gene>
<keyword id="KW-0025">Alternative splicing</keyword>
<keyword id="KW-0158">Chromosome</keyword>
<keyword id="KW-0469">Meiosis</keyword>
<keyword id="KW-0539">Nucleus</keyword>
<keyword id="KW-0597">Phosphoprotein</keyword>
<keyword id="KW-1185">Reference proteome</keyword>
<comment type="function">
    <text evidence="4 5">Essential for synapsis surveillance during meiotic prophase via the recruitment of ATR activity. Plays a key role in the male mid-pachytene checkpoint and the female meiotic prophase checkpoint: required for efficient build-up of ATR activity on unsynapsed chromosome regions, a process believed to form the basis of meiotic silencing of unsynapsed chromatin (MSUC) and meiotic prophase quality control in both sexes. Required for the DNA double-strand break-independent, BRCA1-dependent activation of ATR on the sex chromosomes that is essential for normal sex body formation.</text>
</comment>
<comment type="subunit">
    <text evidence="4">Interacts with HORMAD1.</text>
</comment>
<comment type="subcellular location">
    <subcellularLocation>
        <location>Nucleus</location>
    </subcellularLocation>
    <subcellularLocation>
        <location>Chromosome</location>
    </subcellularLocation>
    <text>Preferentially localizes to unsynapsed or desynapsed chromosomal regions during the male and female prophase I stage of meiosis. TRIP13 is required for depletion from synapsed chromosomes.</text>
</comment>
<comment type="alternative products">
    <event type="alternative splicing"/>
    <isoform>
        <id>Q5SQP1-1</id>
        <name>1</name>
        <sequence type="displayed"/>
    </isoform>
    <isoform>
        <id>Q5SQP1-2</id>
        <name>2</name>
        <sequence type="described" ref="VSP_024605 VSP_024606"/>
    </isoform>
</comment>
<comment type="tissue specificity">
    <text evidence="2">Specifically expressed in meiotic germ cells.</text>
</comment>
<comment type="PTM">
    <text evidence="3 5">Phosphorylated in a SPO11-dependent manner.</text>
</comment>
<comment type="disruption phenotype">
    <text evidence="4 5">Male mice are infertile due to spermatocyte loss as a result of characteristic impairment of sex body formation. Spermatocyte apoptosis is confined to the stage IV seminiferous tubules. In contrast to males, female mice are fertile.</text>
</comment>
<reference key="1">
    <citation type="journal article" date="2005" name="Science">
        <title>The transcriptional landscape of the mammalian genome.</title>
        <authorList>
            <person name="Carninci P."/>
            <person name="Kasukawa T."/>
            <person name="Katayama S."/>
            <person name="Gough J."/>
            <person name="Frith M.C."/>
            <person name="Maeda N."/>
            <person name="Oyama R."/>
            <person name="Ravasi T."/>
            <person name="Lenhard B."/>
            <person name="Wells C."/>
            <person name="Kodzius R."/>
            <person name="Shimokawa K."/>
            <person name="Bajic V.B."/>
            <person name="Brenner S.E."/>
            <person name="Batalov S."/>
            <person name="Forrest A.R."/>
            <person name="Zavolan M."/>
            <person name="Davis M.J."/>
            <person name="Wilming L.G."/>
            <person name="Aidinis V."/>
            <person name="Allen J.E."/>
            <person name="Ambesi-Impiombato A."/>
            <person name="Apweiler R."/>
            <person name="Aturaliya R.N."/>
            <person name="Bailey T.L."/>
            <person name="Bansal M."/>
            <person name="Baxter L."/>
            <person name="Beisel K.W."/>
            <person name="Bersano T."/>
            <person name="Bono H."/>
            <person name="Chalk A.M."/>
            <person name="Chiu K.P."/>
            <person name="Choudhary V."/>
            <person name="Christoffels A."/>
            <person name="Clutterbuck D.R."/>
            <person name="Crowe M.L."/>
            <person name="Dalla E."/>
            <person name="Dalrymple B.P."/>
            <person name="de Bono B."/>
            <person name="Della Gatta G."/>
            <person name="di Bernardo D."/>
            <person name="Down T."/>
            <person name="Engstrom P."/>
            <person name="Fagiolini M."/>
            <person name="Faulkner G."/>
            <person name="Fletcher C.F."/>
            <person name="Fukushima T."/>
            <person name="Furuno M."/>
            <person name="Futaki S."/>
            <person name="Gariboldi M."/>
            <person name="Georgii-Hemming P."/>
            <person name="Gingeras T.R."/>
            <person name="Gojobori T."/>
            <person name="Green R.E."/>
            <person name="Gustincich S."/>
            <person name="Harbers M."/>
            <person name="Hayashi Y."/>
            <person name="Hensch T.K."/>
            <person name="Hirokawa N."/>
            <person name="Hill D."/>
            <person name="Huminiecki L."/>
            <person name="Iacono M."/>
            <person name="Ikeo K."/>
            <person name="Iwama A."/>
            <person name="Ishikawa T."/>
            <person name="Jakt M."/>
            <person name="Kanapin A."/>
            <person name="Katoh M."/>
            <person name="Kawasawa Y."/>
            <person name="Kelso J."/>
            <person name="Kitamura H."/>
            <person name="Kitano H."/>
            <person name="Kollias G."/>
            <person name="Krishnan S.P."/>
            <person name="Kruger A."/>
            <person name="Kummerfeld S.K."/>
            <person name="Kurochkin I.V."/>
            <person name="Lareau L.F."/>
            <person name="Lazarevic D."/>
            <person name="Lipovich L."/>
            <person name="Liu J."/>
            <person name="Liuni S."/>
            <person name="McWilliam S."/>
            <person name="Madan Babu M."/>
            <person name="Madera M."/>
            <person name="Marchionni L."/>
            <person name="Matsuda H."/>
            <person name="Matsuzawa S."/>
            <person name="Miki H."/>
            <person name="Mignone F."/>
            <person name="Miyake S."/>
            <person name="Morris K."/>
            <person name="Mottagui-Tabar S."/>
            <person name="Mulder N."/>
            <person name="Nakano N."/>
            <person name="Nakauchi H."/>
            <person name="Ng P."/>
            <person name="Nilsson R."/>
            <person name="Nishiguchi S."/>
            <person name="Nishikawa S."/>
            <person name="Nori F."/>
            <person name="Ohara O."/>
            <person name="Okazaki Y."/>
            <person name="Orlando V."/>
            <person name="Pang K.C."/>
            <person name="Pavan W.J."/>
            <person name="Pavesi G."/>
            <person name="Pesole G."/>
            <person name="Petrovsky N."/>
            <person name="Piazza S."/>
            <person name="Reed J."/>
            <person name="Reid J.F."/>
            <person name="Ring B.Z."/>
            <person name="Ringwald M."/>
            <person name="Rost B."/>
            <person name="Ruan Y."/>
            <person name="Salzberg S.L."/>
            <person name="Sandelin A."/>
            <person name="Schneider C."/>
            <person name="Schoenbach C."/>
            <person name="Sekiguchi K."/>
            <person name="Semple C.A."/>
            <person name="Seno S."/>
            <person name="Sessa L."/>
            <person name="Sheng Y."/>
            <person name="Shibata Y."/>
            <person name="Shimada H."/>
            <person name="Shimada K."/>
            <person name="Silva D."/>
            <person name="Sinclair B."/>
            <person name="Sperling S."/>
            <person name="Stupka E."/>
            <person name="Sugiura K."/>
            <person name="Sultana R."/>
            <person name="Takenaka Y."/>
            <person name="Taki K."/>
            <person name="Tammoja K."/>
            <person name="Tan S.L."/>
            <person name="Tang S."/>
            <person name="Taylor M.S."/>
            <person name="Tegner J."/>
            <person name="Teichmann S.A."/>
            <person name="Ueda H.R."/>
            <person name="van Nimwegen E."/>
            <person name="Verardo R."/>
            <person name="Wei C.L."/>
            <person name="Yagi K."/>
            <person name="Yamanishi H."/>
            <person name="Zabarovsky E."/>
            <person name="Zhu S."/>
            <person name="Zimmer A."/>
            <person name="Hide W."/>
            <person name="Bult C."/>
            <person name="Grimmond S.M."/>
            <person name="Teasdale R.D."/>
            <person name="Liu E.T."/>
            <person name="Brusic V."/>
            <person name="Quackenbush J."/>
            <person name="Wahlestedt C."/>
            <person name="Mattick J.S."/>
            <person name="Hume D.A."/>
            <person name="Kai C."/>
            <person name="Sasaki D."/>
            <person name="Tomaru Y."/>
            <person name="Fukuda S."/>
            <person name="Kanamori-Katayama M."/>
            <person name="Suzuki M."/>
            <person name="Aoki J."/>
            <person name="Arakawa T."/>
            <person name="Iida J."/>
            <person name="Imamura K."/>
            <person name="Itoh M."/>
            <person name="Kato T."/>
            <person name="Kawaji H."/>
            <person name="Kawagashira N."/>
            <person name="Kawashima T."/>
            <person name="Kojima M."/>
            <person name="Kondo S."/>
            <person name="Konno H."/>
            <person name="Nakano K."/>
            <person name="Ninomiya N."/>
            <person name="Nishio T."/>
            <person name="Okada M."/>
            <person name="Plessy C."/>
            <person name="Shibata K."/>
            <person name="Shiraki T."/>
            <person name="Suzuki S."/>
            <person name="Tagami M."/>
            <person name="Waki K."/>
            <person name="Watahiki A."/>
            <person name="Okamura-Oho Y."/>
            <person name="Suzuki H."/>
            <person name="Kawai J."/>
            <person name="Hayashizaki Y."/>
        </authorList>
    </citation>
    <scope>NUCLEOTIDE SEQUENCE [LARGE SCALE MRNA] (ISOFORM 2)</scope>
    <source>
        <strain>C57BL/6J</strain>
        <tissue>Testis</tissue>
    </source>
</reference>
<reference key="2">
    <citation type="journal article" date="2009" name="PLoS Biol.">
        <title>Lineage-specific biology revealed by a finished genome assembly of the mouse.</title>
        <authorList>
            <person name="Church D.M."/>
            <person name="Goodstadt L."/>
            <person name="Hillier L.W."/>
            <person name="Zody M.C."/>
            <person name="Goldstein S."/>
            <person name="She X."/>
            <person name="Bult C.J."/>
            <person name="Agarwala R."/>
            <person name="Cherry J.L."/>
            <person name="DiCuccio M."/>
            <person name="Hlavina W."/>
            <person name="Kapustin Y."/>
            <person name="Meric P."/>
            <person name="Maglott D."/>
            <person name="Birtle Z."/>
            <person name="Marques A.C."/>
            <person name="Graves T."/>
            <person name="Zhou S."/>
            <person name="Teague B."/>
            <person name="Potamousis K."/>
            <person name="Churas C."/>
            <person name="Place M."/>
            <person name="Herschleb J."/>
            <person name="Runnheim R."/>
            <person name="Forrest D."/>
            <person name="Amos-Landgraf J."/>
            <person name="Schwartz D.C."/>
            <person name="Cheng Z."/>
            <person name="Lindblad-Toh K."/>
            <person name="Eichler E.E."/>
            <person name="Ponting C.P."/>
        </authorList>
    </citation>
    <scope>NUCLEOTIDE SEQUENCE [LARGE SCALE GENOMIC DNA]</scope>
    <source>
        <strain>C57BL/6J</strain>
    </source>
</reference>
<reference key="3">
    <citation type="journal article" date="2004" name="Genome Res.">
        <title>The status, quality, and expansion of the NIH full-length cDNA project: the Mammalian Gene Collection (MGC).</title>
        <authorList>
            <consortium name="The MGC Project Team"/>
        </authorList>
    </citation>
    <scope>NUCLEOTIDE SEQUENCE [LARGE SCALE MRNA] (ISOFORM 1)</scope>
    <source>
        <tissue>Testis</tissue>
    </source>
</reference>
<reference key="4">
    <citation type="journal article" date="2009" name="PLoS Genet.">
        <title>Mouse HORMAD1 and HORMAD2, two conserved meiotic chromosomal proteins, are depleted from synapsed chromosome axes with the help of TRIP13 AAA-ATPase.</title>
        <authorList>
            <person name="Wojtasz L."/>
            <person name="Daniel K."/>
            <person name="Roig I."/>
            <person name="Bolcun-Filas E."/>
            <person name="Xu H."/>
            <person name="Boonsanay V."/>
            <person name="Eckmann C.R."/>
            <person name="Cooke H.J."/>
            <person name="Jasin M."/>
            <person name="Keeney S."/>
            <person name="McKay M.J."/>
            <person name="Toth A."/>
        </authorList>
    </citation>
    <scope>SUBCELLULAR LOCATION</scope>
    <scope>TISSUE SPECIFICITY</scope>
</reference>
<reference key="5">
    <citation type="journal article" date="2010" name="Cell">
        <title>A tissue-specific atlas of mouse protein phosphorylation and expression.</title>
        <authorList>
            <person name="Huttlin E.L."/>
            <person name="Jedrychowski M.P."/>
            <person name="Elias J.E."/>
            <person name="Goswami T."/>
            <person name="Rad R."/>
            <person name="Beausoleil S.A."/>
            <person name="Villen J."/>
            <person name="Haas W."/>
            <person name="Sowa M.E."/>
            <person name="Gygi S.P."/>
        </authorList>
    </citation>
    <scope>PHOSPHORYLATION [LARGE SCALE ANALYSIS] AT SER-271</scope>
    <scope>IDENTIFICATION BY MASS SPECTROMETRY [LARGE SCALE ANALYSIS]</scope>
    <source>
        <tissue>Testis</tissue>
    </source>
</reference>
<reference key="6">
    <citation type="journal article" date="2012" name="Genes Cells">
        <title>HORMAD2 is essential for synapsis surveillance during meiotic prophase via the recruitment of ATR activity.</title>
        <authorList>
            <person name="Kogo H."/>
            <person name="Tsutsumi M."/>
            <person name="Inagaki H."/>
            <person name="Ohye T."/>
            <person name="Kiyonari H."/>
            <person name="Kurahashi H."/>
        </authorList>
    </citation>
    <scope>FUNCTION</scope>
    <scope>DISRUPTION PHENOTYPE</scope>
    <scope>SUBCELLULAR LOCATION</scope>
    <scope>PHOSPHORYLATION</scope>
</reference>
<reference key="7">
    <citation type="journal article" date="2012" name="Genes Dev.">
        <title>Meiotic DNA double-strand breaks and chromosome asynapsis in mice are monitored by distinct HORMAD2-independent and -dependent mechanisms.</title>
        <authorList>
            <person name="Wojtasz L."/>
            <person name="Cloutier J.M."/>
            <person name="Baumann M."/>
            <person name="Daniel K."/>
            <person name="Varga J."/>
            <person name="Fu J."/>
            <person name="Anastassiadis K."/>
            <person name="Stewart A.F."/>
            <person name="Remenyi A."/>
            <person name="Turner J.M."/>
            <person name="Toth A."/>
        </authorList>
    </citation>
    <scope>FUNCTION</scope>
    <scope>DISRUPTION PHENOTYPE</scope>
    <scope>SUBCELLULAR LOCATION</scope>
    <scope>INTERACTION WITH HORMAD1</scope>
</reference>
<reference key="8">
    <citation type="journal article" date="2012" name="PLoS Genet.">
        <title>Phosphorylation of chromosome core components may serve as axis marks for the status of chromosomal events during mammalian meiosis.</title>
        <authorList>
            <person name="Fukuda T."/>
            <person name="Pratto F."/>
            <person name="Schimenti J.C."/>
            <person name="Turner J.M."/>
            <person name="Camerini-Otero R.D."/>
            <person name="Hoeoeg C."/>
        </authorList>
    </citation>
    <scope>SUBCELLULAR LOCATION</scope>
    <scope>PHOSPHORYLATION</scope>
</reference>
<organism>
    <name type="scientific">Mus musculus</name>
    <name type="common">Mouse</name>
    <dbReference type="NCBI Taxonomy" id="10090"/>
    <lineage>
        <taxon>Eukaryota</taxon>
        <taxon>Metazoa</taxon>
        <taxon>Chordata</taxon>
        <taxon>Craniata</taxon>
        <taxon>Vertebrata</taxon>
        <taxon>Euteleostomi</taxon>
        <taxon>Mammalia</taxon>
        <taxon>Eutheria</taxon>
        <taxon>Euarchontoglires</taxon>
        <taxon>Glires</taxon>
        <taxon>Rodentia</taxon>
        <taxon>Myomorpha</taxon>
        <taxon>Muroidea</taxon>
        <taxon>Muridae</taxon>
        <taxon>Murinae</taxon>
        <taxon>Mus</taxon>
        <taxon>Mus</taxon>
    </lineage>
</organism>
<sequence>MATAQLSHNTRTLKASKNTIFPSQVTNEHESLVVVKKLFATCISCITYLRGLFPESSYRDRRLDDLSLKILREDKKCPGSLHIIKWIQGCFDALEKRYLHMAVLTLYTNPKEPEKVTEIYQFRFKYTKKGTTMDFDSSSTSFESGTDSEDIKKACSLLIRQLYILMQNLGPLPNDVILTMKLHYYNSVTPHDYQPPGFKEAVNSHFLLFEGEPVSLRMGSVSSGFHSMKVKVTTEATRMLDGENSVSQDDGTTEIAHQGLDCDEEEEACGSQVQRMNFVHIEPSFESSRKKKKVSEPVTVFIPNRK</sequence>
<protein>
    <recommendedName>
        <fullName>HORMA domain-containing protein 2</fullName>
    </recommendedName>
</protein>
<name>HORM2_MOUSE</name>
<proteinExistence type="evidence at protein level"/>